<comment type="function">
    <text evidence="1 4">GTPase-activating protein for the ADP ribosylation factor family (Potential). Binds phosphatidylinositol 3,4,5-trisphosphate (PtdInsP3) and inositol 1,3,4,5-tetrakisphosphate (InsP4). Possesses a stoichiometry of two binding sites for InsP4 with identical affinity (By similarity).</text>
</comment>
<comment type="subcellular location">
    <subcellularLocation>
        <location evidence="1">Cytoplasm</location>
    </subcellularLocation>
    <subcellularLocation>
        <location evidence="1">Cell membrane</location>
    </subcellularLocation>
    <text evidence="1">Constitutively associated with the plasma membrane. Excluded from the nucleus (By similarity).</text>
</comment>
<feature type="chain" id="PRO_0000074207" description="Arf-GAP with dual PH domain-containing protein 2">
    <location>
        <begin position="1"/>
        <end position="381"/>
    </location>
</feature>
<feature type="domain" description="Arf-GAP" evidence="3">
    <location>
        <begin position="9"/>
        <end position="132"/>
    </location>
</feature>
<feature type="domain" description="PH 1" evidence="2">
    <location>
        <begin position="132"/>
        <end position="233"/>
    </location>
</feature>
<feature type="domain" description="PH 2" evidence="2">
    <location>
        <begin position="255"/>
        <end position="361"/>
    </location>
</feature>
<feature type="zinc finger region" description="C4-type" evidence="3">
    <location>
        <begin position="25"/>
        <end position="48"/>
    </location>
</feature>
<dbReference type="EMBL" id="BC027165">
    <property type="protein sequence ID" value="AAH27165.1"/>
    <property type="molecule type" value="mRNA"/>
</dbReference>
<dbReference type="CCDS" id="CCDS25128.1"/>
<dbReference type="RefSeq" id="NP_742145.1">
    <property type="nucleotide sequence ID" value="NM_172133.1"/>
</dbReference>
<dbReference type="SMR" id="Q8R2V5"/>
<dbReference type="BioGRID" id="229830">
    <property type="interactions" value="1"/>
</dbReference>
<dbReference type="FunCoup" id="Q8R2V5">
    <property type="interactions" value="1135"/>
</dbReference>
<dbReference type="STRING" id="10090.ENSMUSP00000021050"/>
<dbReference type="iPTMnet" id="Q8R2V5"/>
<dbReference type="PhosphoSitePlus" id="Q8R2V5"/>
<dbReference type="PaxDb" id="10090-ENSMUSP00000021050"/>
<dbReference type="ProteomicsDB" id="296061"/>
<dbReference type="Antibodypedia" id="26908">
    <property type="antibodies" value="169 antibodies from 29 providers"/>
</dbReference>
<dbReference type="DNASU" id="216991"/>
<dbReference type="Ensembl" id="ENSMUST00000021050.14">
    <property type="protein sequence ID" value="ENSMUSP00000021050.8"/>
    <property type="gene ID" value="ENSMUSG00000020709.16"/>
</dbReference>
<dbReference type="GeneID" id="216991"/>
<dbReference type="KEGG" id="mmu:216991"/>
<dbReference type="UCSC" id="uc007klk.1">
    <property type="organism name" value="mouse"/>
</dbReference>
<dbReference type="AGR" id="MGI:2663075"/>
<dbReference type="CTD" id="55803"/>
<dbReference type="MGI" id="MGI:2663075">
    <property type="gene designation" value="Adap2"/>
</dbReference>
<dbReference type="VEuPathDB" id="HostDB:ENSMUSG00000020709"/>
<dbReference type="eggNOG" id="KOG0703">
    <property type="taxonomic scope" value="Eukaryota"/>
</dbReference>
<dbReference type="GeneTree" id="ENSGT00940000156498"/>
<dbReference type="HOGENOM" id="CLU_061583_0_0_1"/>
<dbReference type="InParanoid" id="Q8R2V5"/>
<dbReference type="OMA" id="CENDKEQ"/>
<dbReference type="OrthoDB" id="73919at2759"/>
<dbReference type="PhylomeDB" id="Q8R2V5"/>
<dbReference type="TreeFam" id="TF324540"/>
<dbReference type="BioGRID-ORCS" id="216991">
    <property type="hits" value="3 hits in 75 CRISPR screens"/>
</dbReference>
<dbReference type="ChiTaRS" id="Adap2">
    <property type="organism name" value="mouse"/>
</dbReference>
<dbReference type="PRO" id="PR:Q8R2V5"/>
<dbReference type="Proteomes" id="UP000000589">
    <property type="component" value="Chromosome 11"/>
</dbReference>
<dbReference type="RNAct" id="Q8R2V5">
    <property type="molecule type" value="protein"/>
</dbReference>
<dbReference type="Bgee" id="ENSMUSG00000020709">
    <property type="expression patterns" value="Expressed in rostral migratory stream and 139 other cell types or tissues"/>
</dbReference>
<dbReference type="ExpressionAtlas" id="Q8R2V5">
    <property type="expression patterns" value="baseline and differential"/>
</dbReference>
<dbReference type="GO" id="GO:0005737">
    <property type="term" value="C:cytoplasm"/>
    <property type="evidence" value="ECO:0000250"/>
    <property type="project" value="UniProtKB"/>
</dbReference>
<dbReference type="GO" id="GO:0005740">
    <property type="term" value="C:mitochondrial envelope"/>
    <property type="evidence" value="ECO:0000250"/>
    <property type="project" value="UniProtKB"/>
</dbReference>
<dbReference type="GO" id="GO:0005886">
    <property type="term" value="C:plasma membrane"/>
    <property type="evidence" value="ECO:0000250"/>
    <property type="project" value="UniProtKB"/>
</dbReference>
<dbReference type="GO" id="GO:0005096">
    <property type="term" value="F:GTPase activator activity"/>
    <property type="evidence" value="ECO:0007669"/>
    <property type="project" value="UniProtKB-KW"/>
</dbReference>
<dbReference type="GO" id="GO:0043533">
    <property type="term" value="F:inositol 1,3,4,5 tetrakisphosphate binding"/>
    <property type="evidence" value="ECO:0000250"/>
    <property type="project" value="UniProtKB"/>
</dbReference>
<dbReference type="GO" id="GO:0005547">
    <property type="term" value="F:phosphatidylinositol-3,4,5-trisphosphate binding"/>
    <property type="evidence" value="ECO:0000250"/>
    <property type="project" value="UniProtKB"/>
</dbReference>
<dbReference type="GO" id="GO:0043325">
    <property type="term" value="F:phosphatidylinositol-3,4-bisphosphate binding"/>
    <property type="evidence" value="ECO:0000250"/>
    <property type="project" value="UniProtKB"/>
</dbReference>
<dbReference type="GO" id="GO:0005546">
    <property type="term" value="F:phosphatidylinositol-4,5-bisphosphate binding"/>
    <property type="evidence" value="ECO:0000250"/>
    <property type="project" value="UniProtKB"/>
</dbReference>
<dbReference type="GO" id="GO:0008270">
    <property type="term" value="F:zinc ion binding"/>
    <property type="evidence" value="ECO:0007669"/>
    <property type="project" value="UniProtKB-KW"/>
</dbReference>
<dbReference type="GO" id="GO:0007507">
    <property type="term" value="P:heart development"/>
    <property type="evidence" value="ECO:0000303"/>
    <property type="project" value="UniProtKB"/>
</dbReference>
<dbReference type="CDD" id="cd08844">
    <property type="entry name" value="ArfGap_ADAP2"/>
    <property type="match status" value="1"/>
</dbReference>
<dbReference type="CDD" id="cd13252">
    <property type="entry name" value="PH1_ADAP"/>
    <property type="match status" value="1"/>
</dbReference>
<dbReference type="CDD" id="cd01251">
    <property type="entry name" value="PH2_ADAP"/>
    <property type="match status" value="1"/>
</dbReference>
<dbReference type="FunFam" id="2.30.29.30:FF:000080">
    <property type="entry name" value="Arf-GAP with dual PH domain-containing protein 1"/>
    <property type="match status" value="1"/>
</dbReference>
<dbReference type="FunFam" id="2.30.29.30:FF:000099">
    <property type="entry name" value="Arf-GAP with dual PH domain-containing protein 1"/>
    <property type="match status" value="1"/>
</dbReference>
<dbReference type="FunFam" id="1.10.220.150:FF:000015">
    <property type="entry name" value="arf-GAP with dual PH domain-containing protein 2 isoform X1"/>
    <property type="match status" value="1"/>
</dbReference>
<dbReference type="Gene3D" id="1.10.220.150">
    <property type="entry name" value="Arf GTPase activating protein"/>
    <property type="match status" value="1"/>
</dbReference>
<dbReference type="Gene3D" id="2.30.29.30">
    <property type="entry name" value="Pleckstrin-homology domain (PH domain)/Phosphotyrosine-binding domain (PTB)"/>
    <property type="match status" value="2"/>
</dbReference>
<dbReference type="InterPro" id="IPR052589">
    <property type="entry name" value="Arf-GAP_dual-PH_domain"/>
</dbReference>
<dbReference type="InterPro" id="IPR037278">
    <property type="entry name" value="ARFGAP/RecO"/>
</dbReference>
<dbReference type="InterPro" id="IPR001164">
    <property type="entry name" value="ArfGAP_dom"/>
</dbReference>
<dbReference type="InterPro" id="IPR038508">
    <property type="entry name" value="ArfGAP_dom_sf"/>
</dbReference>
<dbReference type="InterPro" id="IPR011993">
    <property type="entry name" value="PH-like_dom_sf"/>
</dbReference>
<dbReference type="InterPro" id="IPR037849">
    <property type="entry name" value="PH1_ADAP"/>
</dbReference>
<dbReference type="InterPro" id="IPR037851">
    <property type="entry name" value="PH2_ADAP"/>
</dbReference>
<dbReference type="InterPro" id="IPR001849">
    <property type="entry name" value="PH_domain"/>
</dbReference>
<dbReference type="PANTHER" id="PTHR46021">
    <property type="entry name" value="ARF-GAP WITH DUAL PH DOMAIN-CONTAINING PROTEIN 1-LIKE PROTEIN"/>
    <property type="match status" value="1"/>
</dbReference>
<dbReference type="PANTHER" id="PTHR46021:SF6">
    <property type="entry name" value="ARF-GAP WITH DUAL PH DOMAIN-CONTAINING PROTEIN 2"/>
    <property type="match status" value="1"/>
</dbReference>
<dbReference type="Pfam" id="PF01412">
    <property type="entry name" value="ArfGap"/>
    <property type="match status" value="1"/>
</dbReference>
<dbReference type="Pfam" id="PF00169">
    <property type="entry name" value="PH"/>
    <property type="match status" value="2"/>
</dbReference>
<dbReference type="PRINTS" id="PR00405">
    <property type="entry name" value="REVINTRACTNG"/>
</dbReference>
<dbReference type="SMART" id="SM00105">
    <property type="entry name" value="ArfGap"/>
    <property type="match status" value="1"/>
</dbReference>
<dbReference type="SMART" id="SM00233">
    <property type="entry name" value="PH"/>
    <property type="match status" value="2"/>
</dbReference>
<dbReference type="SUPFAM" id="SSF57863">
    <property type="entry name" value="ArfGap/RecO-like zinc finger"/>
    <property type="match status" value="1"/>
</dbReference>
<dbReference type="SUPFAM" id="SSF50729">
    <property type="entry name" value="PH domain-like"/>
    <property type="match status" value="2"/>
</dbReference>
<dbReference type="PROSITE" id="PS50115">
    <property type="entry name" value="ARFGAP"/>
    <property type="match status" value="1"/>
</dbReference>
<dbReference type="PROSITE" id="PS50003">
    <property type="entry name" value="PH_DOMAIN"/>
    <property type="match status" value="2"/>
</dbReference>
<accession>Q8R2V5</accession>
<keyword id="KW-1003">Cell membrane</keyword>
<keyword id="KW-0963">Cytoplasm</keyword>
<keyword id="KW-0343">GTPase activation</keyword>
<keyword id="KW-0472">Membrane</keyword>
<keyword id="KW-0479">Metal-binding</keyword>
<keyword id="KW-1185">Reference proteome</keyword>
<keyword id="KW-0677">Repeat</keyword>
<keyword id="KW-0862">Zinc</keyword>
<keyword id="KW-0863">Zinc-finger</keyword>
<gene>
    <name type="primary">Adap2</name>
    <name type="synonym">Centa2</name>
</gene>
<reference key="1">
    <citation type="journal article" date="2004" name="Genome Res.">
        <title>The status, quality, and expansion of the NIH full-length cDNA project: the Mammalian Gene Collection (MGC).</title>
        <authorList>
            <consortium name="The MGC Project Team"/>
        </authorList>
    </citation>
    <scope>NUCLEOTIDE SEQUENCE [LARGE SCALE MRNA]</scope>
    <source>
        <strain>FVB/N</strain>
        <tissue>Mammary tumor</tissue>
    </source>
</reference>
<reference key="2">
    <citation type="journal article" date="2010" name="Cell">
        <title>A tissue-specific atlas of mouse protein phosphorylation and expression.</title>
        <authorList>
            <person name="Huttlin E.L."/>
            <person name="Jedrychowski M.P."/>
            <person name="Elias J.E."/>
            <person name="Goswami T."/>
            <person name="Rad R."/>
            <person name="Beausoleil S.A."/>
            <person name="Villen J."/>
            <person name="Haas W."/>
            <person name="Sowa M.E."/>
            <person name="Gygi S.P."/>
        </authorList>
    </citation>
    <scope>IDENTIFICATION BY MASS SPECTROMETRY [LARGE SCALE ANALYSIS]</scope>
    <source>
        <tissue>Spleen</tissue>
    </source>
</reference>
<sequence length="381" mass="43989">MGDRERNKKRLLELLQAAGTGNGHCADCGAADPDWASYKLGIFICLHCSGVHRNFPDISKVKSVRLDFWDDSMVEFMTHHGNLNVKAKFEARVPAFYYVPQANDCLVLKEQWIRAKYERQEFTAIDKAVSHPGNREGFLWKRGRDNAQFLRRRFVLLSREGLLKYYTKEEGKAPKAVISIKDLNATFQTEKIGHPHGLQITYRKEGHTRNLFVYHDSGKEIVDWFNALRAARLQYLKLAFPDLPESELVPLITRNYLKQGFMEKTGPKHREPFKKRWFALDPQERRLLYYKNPLDAFELGQVFLGSNEQGYEVWEDLPKGIRGNRWKAGLTVITPERKFIFTCPTEKEQREWLESLRGVLSSPLSPLHLLTTSAETGCGLG</sequence>
<name>ADAP2_MOUSE</name>
<proteinExistence type="evidence at protein level"/>
<protein>
    <recommendedName>
        <fullName>Arf-GAP with dual PH domain-containing protein 2</fullName>
    </recommendedName>
    <alternativeName>
        <fullName>Centaurin-alpha-2</fullName>
        <shortName>Cnt-a2</shortName>
    </alternativeName>
</protein>
<organism>
    <name type="scientific">Mus musculus</name>
    <name type="common">Mouse</name>
    <dbReference type="NCBI Taxonomy" id="10090"/>
    <lineage>
        <taxon>Eukaryota</taxon>
        <taxon>Metazoa</taxon>
        <taxon>Chordata</taxon>
        <taxon>Craniata</taxon>
        <taxon>Vertebrata</taxon>
        <taxon>Euteleostomi</taxon>
        <taxon>Mammalia</taxon>
        <taxon>Eutheria</taxon>
        <taxon>Euarchontoglires</taxon>
        <taxon>Glires</taxon>
        <taxon>Rodentia</taxon>
        <taxon>Myomorpha</taxon>
        <taxon>Muroidea</taxon>
        <taxon>Muridae</taxon>
        <taxon>Murinae</taxon>
        <taxon>Mus</taxon>
        <taxon>Mus</taxon>
    </lineage>
</organism>
<evidence type="ECO:0000250" key="1"/>
<evidence type="ECO:0000255" key="2">
    <source>
        <dbReference type="PROSITE-ProRule" id="PRU00145"/>
    </source>
</evidence>
<evidence type="ECO:0000255" key="3">
    <source>
        <dbReference type="PROSITE-ProRule" id="PRU00288"/>
    </source>
</evidence>
<evidence type="ECO:0000305" key="4"/>